<gene>
    <name type="primary">dbp4</name>
    <name type="ORF">SS1G_08323</name>
</gene>
<feature type="chain" id="PRO_0000310200" description="ATP-dependent RNA helicase dbp4">
    <location>
        <begin position="1"/>
        <end position="808"/>
    </location>
</feature>
<feature type="domain" description="Helicase ATP-binding" evidence="2">
    <location>
        <begin position="80"/>
        <end position="254"/>
    </location>
</feature>
<feature type="domain" description="Helicase C-terminal" evidence="3">
    <location>
        <begin position="280"/>
        <end position="439"/>
    </location>
</feature>
<feature type="region of interest" description="Disordered" evidence="4">
    <location>
        <begin position="1"/>
        <end position="20"/>
    </location>
</feature>
<feature type="region of interest" description="Disordered" evidence="4">
    <location>
        <begin position="491"/>
        <end position="535"/>
    </location>
</feature>
<feature type="region of interest" description="Disordered" evidence="4">
    <location>
        <begin position="555"/>
        <end position="620"/>
    </location>
</feature>
<feature type="region of interest" description="Disordered" evidence="4">
    <location>
        <begin position="654"/>
        <end position="795"/>
    </location>
</feature>
<feature type="short sequence motif" description="Q motif">
    <location>
        <begin position="49"/>
        <end position="77"/>
    </location>
</feature>
<feature type="short sequence motif" description="DEAD box">
    <location>
        <begin position="202"/>
        <end position="205"/>
    </location>
</feature>
<feature type="compositionally biased region" description="Basic and acidic residues" evidence="4">
    <location>
        <begin position="519"/>
        <end position="535"/>
    </location>
</feature>
<feature type="compositionally biased region" description="Acidic residues" evidence="4">
    <location>
        <begin position="564"/>
        <end position="573"/>
    </location>
</feature>
<feature type="compositionally biased region" description="Acidic residues" evidence="4">
    <location>
        <begin position="584"/>
        <end position="605"/>
    </location>
</feature>
<feature type="compositionally biased region" description="Basic and acidic residues" evidence="4">
    <location>
        <begin position="670"/>
        <end position="705"/>
    </location>
</feature>
<feature type="compositionally biased region" description="Acidic residues" evidence="4">
    <location>
        <begin position="720"/>
        <end position="739"/>
    </location>
</feature>
<feature type="compositionally biased region" description="Basic and acidic residues" evidence="4">
    <location>
        <begin position="767"/>
        <end position="778"/>
    </location>
</feature>
<feature type="binding site" evidence="2">
    <location>
        <begin position="93"/>
        <end position="100"/>
    </location>
    <ligand>
        <name>ATP</name>
        <dbReference type="ChEBI" id="CHEBI:30616"/>
    </ligand>
</feature>
<accession>A7ESL8</accession>
<reference key="1">
    <citation type="journal article" date="2011" name="PLoS Genet.">
        <title>Genomic analysis of the necrotrophic fungal pathogens Sclerotinia sclerotiorum and Botrytis cinerea.</title>
        <authorList>
            <person name="Amselem J."/>
            <person name="Cuomo C.A."/>
            <person name="van Kan J.A.L."/>
            <person name="Viaud M."/>
            <person name="Benito E.P."/>
            <person name="Couloux A."/>
            <person name="Coutinho P.M."/>
            <person name="de Vries R.P."/>
            <person name="Dyer P.S."/>
            <person name="Fillinger S."/>
            <person name="Fournier E."/>
            <person name="Gout L."/>
            <person name="Hahn M."/>
            <person name="Kohn L."/>
            <person name="Lapalu N."/>
            <person name="Plummer K.M."/>
            <person name="Pradier J.-M."/>
            <person name="Quevillon E."/>
            <person name="Sharon A."/>
            <person name="Simon A."/>
            <person name="ten Have A."/>
            <person name="Tudzynski B."/>
            <person name="Tudzynski P."/>
            <person name="Wincker P."/>
            <person name="Andrew M."/>
            <person name="Anthouard V."/>
            <person name="Beever R.E."/>
            <person name="Beffa R."/>
            <person name="Benoit I."/>
            <person name="Bouzid O."/>
            <person name="Brault B."/>
            <person name="Chen Z."/>
            <person name="Choquer M."/>
            <person name="Collemare J."/>
            <person name="Cotton P."/>
            <person name="Danchin E.G."/>
            <person name="Da Silva C."/>
            <person name="Gautier A."/>
            <person name="Giraud C."/>
            <person name="Giraud T."/>
            <person name="Gonzalez C."/>
            <person name="Grossetete S."/>
            <person name="Gueldener U."/>
            <person name="Henrissat B."/>
            <person name="Howlett B.J."/>
            <person name="Kodira C."/>
            <person name="Kretschmer M."/>
            <person name="Lappartient A."/>
            <person name="Leroch M."/>
            <person name="Levis C."/>
            <person name="Mauceli E."/>
            <person name="Neuveglise C."/>
            <person name="Oeser B."/>
            <person name="Pearson M."/>
            <person name="Poulain J."/>
            <person name="Poussereau N."/>
            <person name="Quesneville H."/>
            <person name="Rascle C."/>
            <person name="Schumacher J."/>
            <person name="Segurens B."/>
            <person name="Sexton A."/>
            <person name="Silva E."/>
            <person name="Sirven C."/>
            <person name="Soanes D.M."/>
            <person name="Talbot N.J."/>
            <person name="Templeton M."/>
            <person name="Yandava C."/>
            <person name="Yarden O."/>
            <person name="Zeng Q."/>
            <person name="Rollins J.A."/>
            <person name="Lebrun M.-H."/>
            <person name="Dickman M."/>
        </authorList>
    </citation>
    <scope>NUCLEOTIDE SEQUENCE [LARGE SCALE GENOMIC DNA]</scope>
    <source>
        <strain>ATCC 18683 / 1980 / Ss-1</strain>
    </source>
</reference>
<sequence length="808" mass="90928">MAPPSVGRKSKNISKGKVDARTLKRKRVEEDLEKLQKSVDELDAKAEIKNFSELPLSGPTSSGLEASHFKTLTDVQSKAVPLALKGKDILGAAKTGSGKTLAFLVPVLENLYRQKWTELDGLGALIISPTRELAIQIFEVLRKIGRYHTFSAGLIIGGRSLQEERERLGRMNILVCTPGRMLQHMDQTAAFDVDNLQMLVLDEADRIMDMGFQTSVDAILEHLPKQRQTMLFSATQTKKVSDLARLSLKEPEYVAVHEAASSATPTTLQQHYCVVPLPEKLNTLFGFIRANLKAKIIVFMSSGKQVRFVYESLRHLQPGIPLLHLHGRQKQTARLDITSKFSSSKNSCIFATDVVARGLDFPAVDWVIQLDCPEDADTYIHRVGRTARYGKVGRAVLFLDPSEEEGMLKRLEHKKVPIQKINIRPNKTQDIKNQLQNMCFQDPELKYLGQKAFVSYAKSVFLQKDKEIFNINDIDLEGYASSIGLPGAPKIKFQKGNDAKNVKNAPRAAIESSDEDSETEKKPKKKDEVRTKYDRMFERRNQDVLSGHYSKMIADDTPMKDVDGTADADEDNDFLSVKRVLPVDNDDTSDDEDDDDDDDDDDDDVAATGPLGKVIEGISKDPIVIDSKRKEKLLKSKKKLLKLKDRGTKLVFDEEGNPHQVYELQDEEDFRAKGTAEEQRAKFLEEEAERVREADLLDKQTAKDKKREKREKRKAREAALDDDDEEALELVDAGDDEDPMALLKSLPLPEDEEDEDSTARPAKRPKKWFEDDSDDERKVAKRKGRVIEAADEPETLEDLEALAAGLLN</sequence>
<proteinExistence type="inferred from homology"/>
<evidence type="ECO:0000250" key="1"/>
<evidence type="ECO:0000255" key="2">
    <source>
        <dbReference type="PROSITE-ProRule" id="PRU00541"/>
    </source>
</evidence>
<evidence type="ECO:0000255" key="3">
    <source>
        <dbReference type="PROSITE-ProRule" id="PRU00542"/>
    </source>
</evidence>
<evidence type="ECO:0000256" key="4">
    <source>
        <dbReference type="SAM" id="MobiDB-lite"/>
    </source>
</evidence>
<evidence type="ECO:0000305" key="5"/>
<protein>
    <recommendedName>
        <fullName>ATP-dependent RNA helicase dbp4</fullName>
        <ecNumber>3.6.4.13</ecNumber>
    </recommendedName>
</protein>
<dbReference type="EC" id="3.6.4.13"/>
<dbReference type="EMBL" id="CH476631">
    <property type="protein sequence ID" value="EDN92460.1"/>
    <property type="molecule type" value="Genomic_DNA"/>
</dbReference>
<dbReference type="RefSeq" id="XP_001590583.1">
    <property type="nucleotide sequence ID" value="XM_001590533.1"/>
</dbReference>
<dbReference type="SMR" id="A7ESL8"/>
<dbReference type="FunCoup" id="A7ESL8">
    <property type="interactions" value="986"/>
</dbReference>
<dbReference type="STRING" id="665079.A7ESL8"/>
<dbReference type="EnsemblFungi" id="EDN92460">
    <property type="protein sequence ID" value="EDN92460"/>
    <property type="gene ID" value="SS1G_08323"/>
</dbReference>
<dbReference type="GeneID" id="5486703"/>
<dbReference type="KEGG" id="ssl:SS1G_08323"/>
<dbReference type="VEuPathDB" id="FungiDB:sscle_10g076290"/>
<dbReference type="eggNOG" id="KOG0343">
    <property type="taxonomic scope" value="Eukaryota"/>
</dbReference>
<dbReference type="HOGENOM" id="CLU_003041_26_1_1"/>
<dbReference type="InParanoid" id="A7ESL8"/>
<dbReference type="OMA" id="YDKMFER"/>
<dbReference type="OrthoDB" id="10259640at2759"/>
<dbReference type="Proteomes" id="UP000001312">
    <property type="component" value="Unassembled WGS sequence"/>
</dbReference>
<dbReference type="GO" id="GO:0005730">
    <property type="term" value="C:nucleolus"/>
    <property type="evidence" value="ECO:0007669"/>
    <property type="project" value="UniProtKB-SubCell"/>
</dbReference>
<dbReference type="GO" id="GO:0005634">
    <property type="term" value="C:nucleus"/>
    <property type="evidence" value="ECO:0000318"/>
    <property type="project" value="GO_Central"/>
</dbReference>
<dbReference type="GO" id="GO:0032040">
    <property type="term" value="C:small-subunit processome"/>
    <property type="evidence" value="ECO:0007669"/>
    <property type="project" value="EnsemblFungi"/>
</dbReference>
<dbReference type="GO" id="GO:0005524">
    <property type="term" value="F:ATP binding"/>
    <property type="evidence" value="ECO:0007669"/>
    <property type="project" value="UniProtKB-KW"/>
</dbReference>
<dbReference type="GO" id="GO:0016887">
    <property type="term" value="F:ATP hydrolysis activity"/>
    <property type="evidence" value="ECO:0007669"/>
    <property type="project" value="RHEA"/>
</dbReference>
<dbReference type="GO" id="GO:0042802">
    <property type="term" value="F:identical protein binding"/>
    <property type="evidence" value="ECO:0007669"/>
    <property type="project" value="EnsemblFungi"/>
</dbReference>
<dbReference type="GO" id="GO:0003723">
    <property type="term" value="F:RNA binding"/>
    <property type="evidence" value="ECO:0007669"/>
    <property type="project" value="UniProtKB-KW"/>
</dbReference>
<dbReference type="GO" id="GO:0003724">
    <property type="term" value="F:RNA helicase activity"/>
    <property type="evidence" value="ECO:0007669"/>
    <property type="project" value="UniProtKB-EC"/>
</dbReference>
<dbReference type="GO" id="GO:0006364">
    <property type="term" value="P:rRNA processing"/>
    <property type="evidence" value="ECO:0000318"/>
    <property type="project" value="GO_Central"/>
</dbReference>
<dbReference type="CDD" id="cd17941">
    <property type="entry name" value="DEADc_DDX10"/>
    <property type="match status" value="1"/>
</dbReference>
<dbReference type="CDD" id="cd18787">
    <property type="entry name" value="SF2_C_DEAD"/>
    <property type="match status" value="1"/>
</dbReference>
<dbReference type="Gene3D" id="3.40.50.300">
    <property type="entry name" value="P-loop containing nucleotide triphosphate hydrolases"/>
    <property type="match status" value="2"/>
</dbReference>
<dbReference type="InterPro" id="IPR011545">
    <property type="entry name" value="DEAD/DEAH_box_helicase_dom"/>
</dbReference>
<dbReference type="InterPro" id="IPR014001">
    <property type="entry name" value="Helicase_ATP-bd"/>
</dbReference>
<dbReference type="InterPro" id="IPR001650">
    <property type="entry name" value="Helicase_C-like"/>
</dbReference>
<dbReference type="InterPro" id="IPR027417">
    <property type="entry name" value="P-loop_NTPase"/>
</dbReference>
<dbReference type="InterPro" id="IPR000629">
    <property type="entry name" value="RNA-helicase_DEAD-box_CS"/>
</dbReference>
<dbReference type="InterPro" id="IPR014014">
    <property type="entry name" value="RNA_helicase_DEAD_Q_motif"/>
</dbReference>
<dbReference type="InterPro" id="IPR025313">
    <property type="entry name" value="SPB4-like_CTE"/>
</dbReference>
<dbReference type="PANTHER" id="PTHR24031">
    <property type="entry name" value="RNA HELICASE"/>
    <property type="match status" value="1"/>
</dbReference>
<dbReference type="Pfam" id="PF13959">
    <property type="entry name" value="CTE_SPB4"/>
    <property type="match status" value="1"/>
</dbReference>
<dbReference type="Pfam" id="PF00270">
    <property type="entry name" value="DEAD"/>
    <property type="match status" value="1"/>
</dbReference>
<dbReference type="Pfam" id="PF00271">
    <property type="entry name" value="Helicase_C"/>
    <property type="match status" value="1"/>
</dbReference>
<dbReference type="SMART" id="SM00487">
    <property type="entry name" value="DEXDc"/>
    <property type="match status" value="1"/>
</dbReference>
<dbReference type="SMART" id="SM01178">
    <property type="entry name" value="DUF4217"/>
    <property type="match status" value="1"/>
</dbReference>
<dbReference type="SMART" id="SM00490">
    <property type="entry name" value="HELICc"/>
    <property type="match status" value="1"/>
</dbReference>
<dbReference type="SUPFAM" id="SSF52540">
    <property type="entry name" value="P-loop containing nucleoside triphosphate hydrolases"/>
    <property type="match status" value="1"/>
</dbReference>
<dbReference type="PROSITE" id="PS00039">
    <property type="entry name" value="DEAD_ATP_HELICASE"/>
    <property type="match status" value="1"/>
</dbReference>
<dbReference type="PROSITE" id="PS51192">
    <property type="entry name" value="HELICASE_ATP_BIND_1"/>
    <property type="match status" value="1"/>
</dbReference>
<dbReference type="PROSITE" id="PS51194">
    <property type="entry name" value="HELICASE_CTER"/>
    <property type="match status" value="1"/>
</dbReference>
<dbReference type="PROSITE" id="PS51195">
    <property type="entry name" value="Q_MOTIF"/>
    <property type="match status" value="1"/>
</dbReference>
<organism>
    <name type="scientific">Sclerotinia sclerotiorum (strain ATCC 18683 / 1980 / Ss-1)</name>
    <name type="common">White mold</name>
    <name type="synonym">Whetzelinia sclerotiorum</name>
    <dbReference type="NCBI Taxonomy" id="665079"/>
    <lineage>
        <taxon>Eukaryota</taxon>
        <taxon>Fungi</taxon>
        <taxon>Dikarya</taxon>
        <taxon>Ascomycota</taxon>
        <taxon>Pezizomycotina</taxon>
        <taxon>Leotiomycetes</taxon>
        <taxon>Helotiales</taxon>
        <taxon>Sclerotiniaceae</taxon>
        <taxon>Sclerotinia</taxon>
    </lineage>
</organism>
<name>DBP4_SCLS1</name>
<comment type="function">
    <text evidence="1">ATP-dependent RNA helicase required for ribosome biogenesis. Involved in the release of U14 snoRNA in pre-ribosomal complexes. Required for pre-rRNA cleavage at site A2 (By similarity).</text>
</comment>
<comment type="catalytic activity">
    <reaction>
        <text>ATP + H2O = ADP + phosphate + H(+)</text>
        <dbReference type="Rhea" id="RHEA:13065"/>
        <dbReference type="ChEBI" id="CHEBI:15377"/>
        <dbReference type="ChEBI" id="CHEBI:15378"/>
        <dbReference type="ChEBI" id="CHEBI:30616"/>
        <dbReference type="ChEBI" id="CHEBI:43474"/>
        <dbReference type="ChEBI" id="CHEBI:456216"/>
        <dbReference type="EC" id="3.6.4.13"/>
    </reaction>
</comment>
<comment type="subunit">
    <text evidence="1">Interacts with the U3 and U14 snoRNAs. Associates with pre-ribosomal complexes (By similarity).</text>
</comment>
<comment type="subcellular location">
    <subcellularLocation>
        <location evidence="1">Nucleus</location>
        <location evidence="1">Nucleolus</location>
    </subcellularLocation>
</comment>
<comment type="domain">
    <text>The Q motif is unique to and characteristic of the DEAD box family of RNA helicases and controls ATP binding and hydrolysis.</text>
</comment>
<comment type="similarity">
    <text evidence="5">Belongs to the DEAD box helicase family. DDX10/DBP4 subfamily.</text>
</comment>
<keyword id="KW-0067">ATP-binding</keyword>
<keyword id="KW-0347">Helicase</keyword>
<keyword id="KW-0378">Hydrolase</keyword>
<keyword id="KW-0547">Nucleotide-binding</keyword>
<keyword id="KW-0539">Nucleus</keyword>
<keyword id="KW-1185">Reference proteome</keyword>
<keyword id="KW-0690">Ribosome biogenesis</keyword>
<keyword id="KW-0694">RNA-binding</keyword>
<keyword id="KW-0698">rRNA processing</keyword>